<evidence type="ECO:0000305" key="1"/>
<reference key="1">
    <citation type="journal article" date="1999" name="Genetics">
        <title>Multiple chromosomes in bacteria. The yin and yang of trp gene localization in Rhodobacter sphaeroides 2.4.1.</title>
        <authorList>
            <person name="Mackenzie C."/>
            <person name="Simmons A.E."/>
            <person name="Kaplan S."/>
        </authorList>
    </citation>
    <scope>NUCLEOTIDE SEQUENCE [GENOMIC DNA]</scope>
</reference>
<reference key="2">
    <citation type="submission" date="2005-09" db="EMBL/GenBank/DDBJ databases">
        <title>Complete sequence of chromosome 2 of Rhodobacter sphaeroides 2.4.1.</title>
        <authorList>
            <person name="Copeland A."/>
            <person name="Lucas S."/>
            <person name="Lapidus A."/>
            <person name="Barry K."/>
            <person name="Detter J.C."/>
            <person name="Glavina T."/>
            <person name="Hammon N."/>
            <person name="Israni S."/>
            <person name="Pitluck S."/>
            <person name="Richardson P."/>
            <person name="Mackenzie C."/>
            <person name="Choudhary M."/>
            <person name="Larimer F."/>
            <person name="Hauser L.J."/>
            <person name="Land M."/>
            <person name="Donohue T.J."/>
            <person name="Kaplan S."/>
        </authorList>
    </citation>
    <scope>NUCLEOTIDE SEQUENCE [LARGE SCALE GENOMIC DNA]</scope>
    <source>
        <strain>ATCC 17023 / DSM 158 / JCM 6121 / CCUG 31486 / LMG 2827 / NBRC 12203 / NCIMB 8253 / ATH 2.4.1.</strain>
    </source>
</reference>
<protein>
    <recommendedName>
        <fullName>N-(5'-phosphoribosyl)anthranilate isomerase</fullName>
        <shortName>PRAI</shortName>
        <ecNumber>5.3.1.24</ecNumber>
    </recommendedName>
</protein>
<keyword id="KW-0028">Amino-acid biosynthesis</keyword>
<keyword id="KW-0057">Aromatic amino acid biosynthesis</keyword>
<keyword id="KW-0413">Isomerase</keyword>
<keyword id="KW-1185">Reference proteome</keyword>
<keyword id="KW-0822">Tryptophan biosynthesis</keyword>
<name>TRPF_CERS4</name>
<feature type="chain" id="PRO_0000154375" description="N-(5'-phosphoribosyl)anthranilate isomerase">
    <location>
        <begin position="1"/>
        <end position="212"/>
    </location>
</feature>
<accession>Q9X4E3</accession>
<accession>Q3IW94</accession>
<gene>
    <name type="primary">trpF</name>
    <name type="ordered locus">RHOS4_36220</name>
    <name type="ORF">RSP_3587</name>
</gene>
<comment type="catalytic activity">
    <reaction>
        <text>N-(5-phospho-beta-D-ribosyl)anthranilate = 1-(2-carboxyphenylamino)-1-deoxy-D-ribulose 5-phosphate</text>
        <dbReference type="Rhea" id="RHEA:21540"/>
        <dbReference type="ChEBI" id="CHEBI:18277"/>
        <dbReference type="ChEBI" id="CHEBI:58613"/>
        <dbReference type="EC" id="5.3.1.24"/>
    </reaction>
</comment>
<comment type="pathway">
    <text>Amino-acid biosynthesis; L-tryptophan biosynthesis; L-tryptophan from chorismate: step 3/5.</text>
</comment>
<comment type="similarity">
    <text evidence="1">Belongs to the TrpF family.</text>
</comment>
<organism>
    <name type="scientific">Cereibacter sphaeroides (strain ATCC 17023 / DSM 158 / JCM 6121 / CCUG 31486 / LMG 2827 / NBRC 12203 / NCIMB 8253 / ATH 2.4.1.)</name>
    <name type="common">Rhodobacter sphaeroides</name>
    <dbReference type="NCBI Taxonomy" id="272943"/>
    <lineage>
        <taxon>Bacteria</taxon>
        <taxon>Pseudomonadati</taxon>
        <taxon>Pseudomonadota</taxon>
        <taxon>Alphaproteobacteria</taxon>
        <taxon>Rhodobacterales</taxon>
        <taxon>Paracoccaceae</taxon>
        <taxon>Cereibacter</taxon>
    </lineage>
</organism>
<dbReference type="EC" id="5.3.1.24"/>
<dbReference type="EMBL" id="AF107093">
    <property type="protein sequence ID" value="AAD29259.1"/>
    <property type="molecule type" value="Genomic_DNA"/>
</dbReference>
<dbReference type="EMBL" id="CP000144">
    <property type="protein sequence ID" value="ABA81190.1"/>
    <property type="molecule type" value="Genomic_DNA"/>
</dbReference>
<dbReference type="RefSeq" id="WP_011339435.1">
    <property type="nucleotide sequence ID" value="NC_007494.2"/>
</dbReference>
<dbReference type="RefSeq" id="YP_355091.1">
    <property type="nucleotide sequence ID" value="NC_007494.2"/>
</dbReference>
<dbReference type="SMR" id="Q9X4E3"/>
<dbReference type="STRING" id="272943.RSP_3587"/>
<dbReference type="EnsemblBacteria" id="ABA81190">
    <property type="protein sequence ID" value="ABA81190"/>
    <property type="gene ID" value="RSP_3587"/>
</dbReference>
<dbReference type="GeneID" id="3722104"/>
<dbReference type="KEGG" id="rsp:RSP_3587"/>
<dbReference type="PATRIC" id="fig|272943.9.peg.4023"/>
<dbReference type="eggNOG" id="COG0135">
    <property type="taxonomic scope" value="Bacteria"/>
</dbReference>
<dbReference type="OrthoDB" id="9796196at2"/>
<dbReference type="PhylomeDB" id="Q9X4E3"/>
<dbReference type="UniPathway" id="UPA00035">
    <property type="reaction ID" value="UER00042"/>
</dbReference>
<dbReference type="Proteomes" id="UP000002703">
    <property type="component" value="Chromosome 2"/>
</dbReference>
<dbReference type="GO" id="GO:0004640">
    <property type="term" value="F:phosphoribosylanthranilate isomerase activity"/>
    <property type="evidence" value="ECO:0007669"/>
    <property type="project" value="UniProtKB-UniRule"/>
</dbReference>
<dbReference type="GO" id="GO:0000162">
    <property type="term" value="P:L-tryptophan biosynthetic process"/>
    <property type="evidence" value="ECO:0007669"/>
    <property type="project" value="UniProtKB-UniRule"/>
</dbReference>
<dbReference type="CDD" id="cd00405">
    <property type="entry name" value="PRAI"/>
    <property type="match status" value="1"/>
</dbReference>
<dbReference type="Gene3D" id="3.20.20.70">
    <property type="entry name" value="Aldolase class I"/>
    <property type="match status" value="1"/>
</dbReference>
<dbReference type="HAMAP" id="MF_00135">
    <property type="entry name" value="PRAI"/>
    <property type="match status" value="1"/>
</dbReference>
<dbReference type="InterPro" id="IPR013785">
    <property type="entry name" value="Aldolase_TIM"/>
</dbReference>
<dbReference type="InterPro" id="IPR001240">
    <property type="entry name" value="PRAI_dom"/>
</dbReference>
<dbReference type="InterPro" id="IPR011060">
    <property type="entry name" value="RibuloseP-bd_barrel"/>
</dbReference>
<dbReference type="InterPro" id="IPR044643">
    <property type="entry name" value="TrpF_fam"/>
</dbReference>
<dbReference type="NCBIfam" id="NF002295">
    <property type="entry name" value="PRK01222.1-1"/>
    <property type="match status" value="1"/>
</dbReference>
<dbReference type="PANTHER" id="PTHR42894">
    <property type="entry name" value="N-(5'-PHOSPHORIBOSYL)ANTHRANILATE ISOMERASE"/>
    <property type="match status" value="1"/>
</dbReference>
<dbReference type="PANTHER" id="PTHR42894:SF1">
    <property type="entry name" value="N-(5'-PHOSPHORIBOSYL)ANTHRANILATE ISOMERASE"/>
    <property type="match status" value="1"/>
</dbReference>
<dbReference type="Pfam" id="PF00697">
    <property type="entry name" value="PRAI"/>
    <property type="match status" value="1"/>
</dbReference>
<dbReference type="SUPFAM" id="SSF51366">
    <property type="entry name" value="Ribulose-phoshate binding barrel"/>
    <property type="match status" value="1"/>
</dbReference>
<sequence length="212" mass="22142">MAGVRVKICGLRTESDVKAAASSGAAYVGLVFFPKSPRHLELAQAQRLALAAPPGVAKVALTVDASDETLDAIVEAVPLDMLQLHGGESPERVAEVRARYGLPVMKAVGVADEGDLPQILEQSLAADQILIDAKPPKGAALPGGNGLSFDWRLISGRHWIRPWMLAGGLTVENLAEAVRRTGASQVDVSSGVESAPGVKDPARIAAFLQAAR</sequence>
<proteinExistence type="inferred from homology"/>